<feature type="chain" id="PRO_0000156815" description="Plasmolipin">
    <location>
        <begin position="1"/>
        <end position="182"/>
    </location>
</feature>
<feature type="topological domain" description="Cytoplasmic" evidence="3">
    <location>
        <begin position="1"/>
        <end position="35"/>
    </location>
</feature>
<feature type="transmembrane region" description="Helical" evidence="3">
    <location>
        <begin position="36"/>
        <end position="56"/>
    </location>
</feature>
<feature type="topological domain" description="Extracellular" evidence="3">
    <location>
        <begin position="57"/>
        <end position="68"/>
    </location>
</feature>
<feature type="transmembrane region" description="Helical" evidence="3">
    <location>
        <begin position="69"/>
        <end position="89"/>
    </location>
</feature>
<feature type="topological domain" description="Cytoplasmic" evidence="3">
    <location>
        <begin position="90"/>
        <end position="99"/>
    </location>
</feature>
<feature type="transmembrane region" description="Helical" evidence="3">
    <location>
        <begin position="100"/>
        <end position="120"/>
    </location>
</feature>
<feature type="topological domain" description="Extracellular" evidence="3">
    <location>
        <begin position="121"/>
        <end position="141"/>
    </location>
</feature>
<feature type="transmembrane region" description="Helical" evidence="3">
    <location>
        <begin position="142"/>
        <end position="162"/>
    </location>
</feature>
<feature type="topological domain" description="Cytoplasmic" evidence="3">
    <location>
        <begin position="163"/>
        <end position="182"/>
    </location>
</feature>
<feature type="domain" description="MARVEL" evidence="4">
    <location>
        <begin position="32"/>
        <end position="166"/>
    </location>
</feature>
<feature type="region of interest" description="Disordered" evidence="5">
    <location>
        <begin position="1"/>
        <end position="20"/>
    </location>
</feature>
<feature type="compositionally biased region" description="Polar residues" evidence="5">
    <location>
        <begin position="7"/>
        <end position="16"/>
    </location>
</feature>
<feature type="modified residue" description="Phosphoserine" evidence="12">
    <location>
        <position position="9"/>
    </location>
</feature>
<gene>
    <name type="primary">Pllp</name>
    <name type="synonym">Pmlp</name>
    <name type="synonym">Tm4sf11</name>
</gene>
<reference key="1">
    <citation type="journal article" date="1994" name="J. Biol. Chem.">
        <title>Molecular cloning of plasmolipin. Characterization of a novel proteolipid restricted to brain and kidney.</title>
        <authorList>
            <person name="Fischer I."/>
            <person name="Sapirstein V.S."/>
        </authorList>
    </citation>
    <scope>NUCLEOTIDE SEQUENCE [MRNA]</scope>
    <scope>TISSUE SPECIFICITY</scope>
    <source>
        <strain>Sprague-Dawley</strain>
        <tissue>Kidney</tissue>
    </source>
</reference>
<reference key="2">
    <citation type="journal article" date="1996" name="Eur. J. Neurosci.">
        <title>Full-lenth cloning, expression and cellular localization of rat plasmolipin mRNA, a proteolipid of PNS and CNS.</title>
        <authorList>
            <person name="Gillen C."/>
            <person name="Gleichmann M."/>
            <person name="Greiner-Petter R."/>
            <person name="Zoidl G."/>
            <person name="Kupfer S."/>
            <person name="Bosse F."/>
            <person name="Auer J."/>
            <person name="Mueller H.W."/>
        </authorList>
    </citation>
    <scope>NUCLEOTIDE SEQUENCE [MRNA]</scope>
    <scope>TISSUE SPECIFICITY</scope>
    <scope>FUNCTION</scope>
    <scope>DEVELOPMENTAL STAGE</scope>
    <source>
        <strain>Wistar</strain>
        <tissue>Sciatic nerve</tissue>
    </source>
</reference>
<reference key="3">
    <citation type="journal article" date="2004" name="Genome Res.">
        <title>The status, quality, and expansion of the NIH full-length cDNA project: the Mammalian Gene Collection (MGC).</title>
        <authorList>
            <consortium name="The MGC Project Team"/>
        </authorList>
    </citation>
    <scope>NUCLEOTIDE SEQUENCE [LARGE SCALE MRNA]</scope>
    <source>
        <tissue>Kidney</tissue>
    </source>
</reference>
<reference key="4">
    <citation type="journal article" date="2012" name="Nat. Commun.">
        <title>Quantitative maps of protein phosphorylation sites across 14 different rat organs and tissues.</title>
        <authorList>
            <person name="Lundby A."/>
            <person name="Secher A."/>
            <person name="Lage K."/>
            <person name="Nordsborg N.B."/>
            <person name="Dmytriyev A."/>
            <person name="Lundby C."/>
            <person name="Olsen J.V."/>
        </authorList>
    </citation>
    <scope>PHOSPHORYLATION [LARGE SCALE ANALYSIS] AT SER-9</scope>
    <scope>IDENTIFICATION BY MASS SPECTROMETRY [LARGE SCALE ANALYSIS]</scope>
</reference>
<reference key="5">
    <citation type="journal article" date="2003" name="J. Neurochem.">
        <title>Proteolipid plasmolipin: localization in polarized cells, regulated expression and lipid raft association in CNS and PNS myelin.</title>
        <authorList>
            <person name="Bosse F."/>
            <person name="Hasse B."/>
            <person name="Pippirs U."/>
            <person name="Greiner-Petter R."/>
            <person name="Mueller H.W."/>
        </authorList>
    </citation>
    <scope>DEVELOPMENTAL STAGE</scope>
    <scope>SUBCELLULAR LOCATION</scope>
    <scope>PHOSPHORYLATION</scope>
    <scope>TISSUE SPECIFICITY</scope>
</reference>
<protein>
    <recommendedName>
        <fullName evidence="9">Plasmolipin</fullName>
    </recommendedName>
    <alternativeName>
        <fullName>Plasma membrane proteolipid</fullName>
    </alternativeName>
</protein>
<keyword id="KW-1003">Cell membrane</keyword>
<keyword id="KW-0472">Membrane</keyword>
<keyword id="KW-0597">Phosphoprotein</keyword>
<keyword id="KW-1185">Reference proteome</keyword>
<keyword id="KW-0812">Transmembrane</keyword>
<keyword id="KW-1133">Transmembrane helix</keyword>
<dbReference type="EMBL" id="U13617">
    <property type="protein sequence ID" value="AAA62133.1"/>
    <property type="status" value="ALT_INIT"/>
    <property type="molecule type" value="mRNA"/>
</dbReference>
<dbReference type="EMBL" id="Z49858">
    <property type="protein sequence ID" value="CAA90017.1"/>
    <property type="molecule type" value="mRNA"/>
</dbReference>
<dbReference type="EMBL" id="BC078823">
    <property type="protein sequence ID" value="AAH78823.1"/>
    <property type="molecule type" value="mRNA"/>
</dbReference>
<dbReference type="PIR" id="A55046">
    <property type="entry name" value="A55046"/>
</dbReference>
<dbReference type="RefSeq" id="NP_071978.1">
    <property type="nucleotide sequence ID" value="NM_022533.2"/>
</dbReference>
<dbReference type="SMR" id="P47987"/>
<dbReference type="BioGRID" id="249048">
    <property type="interactions" value="1"/>
</dbReference>
<dbReference type="FunCoup" id="P47987">
    <property type="interactions" value="225"/>
</dbReference>
<dbReference type="STRING" id="10116.ENSRNOP00000022277"/>
<dbReference type="TCDB" id="1.A.64.1.1">
    <property type="family name" value="the plasmolipin (plasmolipin) family"/>
</dbReference>
<dbReference type="iPTMnet" id="P47987"/>
<dbReference type="PhosphoSitePlus" id="P47987"/>
<dbReference type="PaxDb" id="10116-ENSRNOP00000022277"/>
<dbReference type="Ensembl" id="ENSRNOT00000022277.4">
    <property type="protein sequence ID" value="ENSRNOP00000022277.2"/>
    <property type="gene ID" value="ENSRNOG00000016558.4"/>
</dbReference>
<dbReference type="GeneID" id="64364"/>
<dbReference type="KEGG" id="rno:64364"/>
<dbReference type="UCSC" id="RGD:621478">
    <property type="organism name" value="rat"/>
</dbReference>
<dbReference type="AGR" id="RGD:621478"/>
<dbReference type="CTD" id="51090"/>
<dbReference type="RGD" id="621478">
    <property type="gene designation" value="Pllp"/>
</dbReference>
<dbReference type="eggNOG" id="KOG4788">
    <property type="taxonomic scope" value="Eukaryota"/>
</dbReference>
<dbReference type="GeneTree" id="ENSGT00940000156011"/>
<dbReference type="HOGENOM" id="CLU_103581_2_0_1"/>
<dbReference type="InParanoid" id="P47987"/>
<dbReference type="OMA" id="MYATAFI"/>
<dbReference type="OrthoDB" id="6258237at2759"/>
<dbReference type="PhylomeDB" id="P47987"/>
<dbReference type="TreeFam" id="TF316174"/>
<dbReference type="PRO" id="PR:P47987"/>
<dbReference type="Proteomes" id="UP000002494">
    <property type="component" value="Chromosome 19"/>
</dbReference>
<dbReference type="Bgee" id="ENSRNOG00000016558">
    <property type="expression patterns" value="Expressed in stomach and 17 other cell types or tissues"/>
</dbReference>
<dbReference type="GO" id="GO:0016324">
    <property type="term" value="C:apical plasma membrane"/>
    <property type="evidence" value="ECO:0000314"/>
    <property type="project" value="UniProtKB"/>
</dbReference>
<dbReference type="GO" id="GO:0043218">
    <property type="term" value="C:compact myelin"/>
    <property type="evidence" value="ECO:0000314"/>
    <property type="project" value="RGD"/>
</dbReference>
<dbReference type="GO" id="GO:0016020">
    <property type="term" value="C:membrane"/>
    <property type="evidence" value="ECO:0000318"/>
    <property type="project" value="GO_Central"/>
</dbReference>
<dbReference type="GO" id="GO:0045121">
    <property type="term" value="C:membrane raft"/>
    <property type="evidence" value="ECO:0000314"/>
    <property type="project" value="UniProtKB"/>
</dbReference>
<dbReference type="GO" id="GO:0043209">
    <property type="term" value="C:myelin sheath"/>
    <property type="evidence" value="ECO:0000266"/>
    <property type="project" value="RGD"/>
</dbReference>
<dbReference type="GO" id="GO:0005886">
    <property type="term" value="C:plasma membrane"/>
    <property type="evidence" value="ECO:0000266"/>
    <property type="project" value="RGD"/>
</dbReference>
<dbReference type="GO" id="GO:0042802">
    <property type="term" value="F:identical protein binding"/>
    <property type="evidence" value="ECO:0000266"/>
    <property type="project" value="RGD"/>
</dbReference>
<dbReference type="GO" id="GO:0019911">
    <property type="term" value="F:structural constituent of myelin sheath"/>
    <property type="evidence" value="ECO:0000318"/>
    <property type="project" value="GO_Central"/>
</dbReference>
<dbReference type="GO" id="GO:0006811">
    <property type="term" value="P:monoatomic ion transport"/>
    <property type="evidence" value="ECO:0000314"/>
    <property type="project" value="RGD"/>
</dbReference>
<dbReference type="GO" id="GO:0032288">
    <property type="term" value="P:myelin assembly"/>
    <property type="evidence" value="ECO:0000266"/>
    <property type="project" value="RGD"/>
</dbReference>
<dbReference type="GO" id="GO:0042552">
    <property type="term" value="P:myelination"/>
    <property type="evidence" value="ECO:0000270"/>
    <property type="project" value="RGD"/>
</dbReference>
<dbReference type="GO" id="GO:0030100">
    <property type="term" value="P:regulation of endocytosis"/>
    <property type="evidence" value="ECO:0000250"/>
    <property type="project" value="UniProtKB"/>
</dbReference>
<dbReference type="GO" id="GO:1904298">
    <property type="term" value="P:regulation of transcytosis"/>
    <property type="evidence" value="ECO:0000266"/>
    <property type="project" value="RGD"/>
</dbReference>
<dbReference type="InterPro" id="IPR013295">
    <property type="entry name" value="MAL"/>
</dbReference>
<dbReference type="InterPro" id="IPR008253">
    <property type="entry name" value="Marvel"/>
</dbReference>
<dbReference type="InterPro" id="IPR050578">
    <property type="entry name" value="MARVEL-CKLF_proteins"/>
</dbReference>
<dbReference type="PANTHER" id="PTHR22776">
    <property type="entry name" value="MARVEL-CONTAINING POTENTIAL LIPID RAFT-ASSOCIATED PROTEIN"/>
    <property type="match status" value="1"/>
</dbReference>
<dbReference type="PANTHER" id="PTHR22776:SF9">
    <property type="entry name" value="PLASMOLIPIN"/>
    <property type="match status" value="1"/>
</dbReference>
<dbReference type="Pfam" id="PF01284">
    <property type="entry name" value="MARVEL"/>
    <property type="match status" value="1"/>
</dbReference>
<dbReference type="PRINTS" id="PR01884">
    <property type="entry name" value="MALPROTEIN"/>
</dbReference>
<dbReference type="PROSITE" id="PS51225">
    <property type="entry name" value="MARVEL"/>
    <property type="match status" value="1"/>
</dbReference>
<proteinExistence type="evidence at protein level"/>
<evidence type="ECO:0000250" key="1">
    <source>
        <dbReference type="UniProtKB" id="A3KQ86"/>
    </source>
</evidence>
<evidence type="ECO:0000250" key="2">
    <source>
        <dbReference type="UniProtKB" id="Q9Y342"/>
    </source>
</evidence>
<evidence type="ECO:0000255" key="3"/>
<evidence type="ECO:0000255" key="4">
    <source>
        <dbReference type="PROSITE-ProRule" id="PRU00581"/>
    </source>
</evidence>
<evidence type="ECO:0000256" key="5">
    <source>
        <dbReference type="SAM" id="MobiDB-lite"/>
    </source>
</evidence>
<evidence type="ECO:0000269" key="6">
    <source>
    </source>
</evidence>
<evidence type="ECO:0000269" key="7">
    <source>
    </source>
</evidence>
<evidence type="ECO:0000269" key="8">
    <source>
    </source>
</evidence>
<evidence type="ECO:0000303" key="9">
    <source>
    </source>
</evidence>
<evidence type="ECO:0000305" key="10"/>
<evidence type="ECO:0000305" key="11">
    <source>
    </source>
</evidence>
<evidence type="ECO:0007744" key="12">
    <source>
    </source>
</evidence>
<name>PLLP_RAT</name>
<sequence>MAEFPSKVSTRTSSPAQGVGASVSAMRPDLGFVRSALGVLALLQLVLGLLVWALIADTPYHLYPAYGWVMFVAVFLWLVTIVFFIIYLFQLHMKLYMVPWPLVLLVFFVAATVLYITAFVACAAAVDLTSLRGSRPYNQRSAASFFACLVMIAYGLSAFFSFQAWRGVGSNAATSQMAGGYS</sequence>
<organism>
    <name type="scientific">Rattus norvegicus</name>
    <name type="common">Rat</name>
    <dbReference type="NCBI Taxonomy" id="10116"/>
    <lineage>
        <taxon>Eukaryota</taxon>
        <taxon>Metazoa</taxon>
        <taxon>Chordata</taxon>
        <taxon>Craniata</taxon>
        <taxon>Vertebrata</taxon>
        <taxon>Euteleostomi</taxon>
        <taxon>Mammalia</taxon>
        <taxon>Eutheria</taxon>
        <taxon>Euarchontoglires</taxon>
        <taxon>Glires</taxon>
        <taxon>Rodentia</taxon>
        <taxon>Myomorpha</taxon>
        <taxon>Muroidea</taxon>
        <taxon>Muridae</taxon>
        <taxon>Murinae</taxon>
        <taxon>Rattus</taxon>
    </lineage>
</organism>
<comment type="function">
    <text evidence="1 2 11">Main component of the myelin sheath that plays an important role in myelin membrane biogenesis and myelination (Probable). Plays an essential function in apical endocytosis. Regulates epithelial development through the regulation of apical endocytosis (By similarity). Part of the intracellular machinery that mediates basolateral-to-apical transport of ICAM-1, an essential adhesion receptor in epithelial cells, from the subapical compartment in hepatic epithelial cells (By similarity).</text>
</comment>
<comment type="subunit">
    <text evidence="2">Forms oligomers.</text>
</comment>
<comment type="subcellular location">
    <subcellularLocation>
        <location evidence="2">Cell membrane</location>
        <topology evidence="3">Multi-pass membrane protein</topology>
    </subcellularLocation>
    <subcellularLocation>
        <location evidence="3">Myelin membrane</location>
        <topology evidence="3">Multi-pass membrane protein</topology>
    </subcellularLocation>
    <subcellularLocation>
        <location evidence="6">Apical cell membrane</location>
        <topology evidence="3">Multi-pass membrane protein</topology>
    </subcellularLocation>
    <text evidence="2 6">In polarized cells, localized predominantly in the apical membrane (PubMed:12871592). Located in lipid raft (PubMed:12871592). Recycled between the plasma membrane and the Golgi complex (By similarity). PLLP is continuously recirculating in the cell (By similarity).</text>
</comment>
<comment type="tissue specificity">
    <text evidence="6 7 8">Detected to the sciatic nerve, brain and kidney. In the sciatic nerve, found in Schwann cells; in the brain, in developing oligodendrocytes, especially of the corpus callosum, of cortical white matter, in the optic nerve and in the stratum radiatum and stratum oriens of the hippocampus. In kidney, segregated to the apical surface of renal tubular epithelia.</text>
</comment>
<comment type="developmental stage">
    <text evidence="8">In the sciatic nerve, first detected at postnatal day P4, increases to a maximum at day P14 and then declines to moderate levels in adulthood. In the brain, onset of expression is at day P1, levels increase to reach a maximum at P20 and decline slightly to adulthood.</text>
</comment>
<comment type="PTM">
    <text evidence="6">Phosphorylated.</text>
</comment>
<comment type="similarity">
    <text evidence="10">Belongs to the MAL family.</text>
</comment>
<comment type="sequence caution" evidence="10">
    <conflict type="erroneous initiation">
        <sequence resource="EMBL-CDS" id="AAA62133"/>
    </conflict>
</comment>
<accession>P47987</accession>